<name>TRBP2_BOVIN</name>
<reference key="1">
    <citation type="submission" date="2006-08" db="EMBL/GenBank/DDBJ databases">
        <authorList>
            <consortium name="NIH - Mammalian Gene Collection (MGC) project"/>
        </authorList>
    </citation>
    <scope>NUCLEOTIDE SEQUENCE [LARGE SCALE MRNA]</scope>
    <source>
        <strain>Hereford</strain>
        <tissue>Brain cortex</tissue>
    </source>
</reference>
<reference key="2">
    <citation type="journal article" date="2001" name="Genome Res.">
        <title>Sequence evaluation of four pooled-tissue normalized bovine cDNA libraries and construction of a gene index for cattle.</title>
        <authorList>
            <person name="Smith T.P.L."/>
            <person name="Grosse W.M."/>
            <person name="Freking B.A."/>
            <person name="Roberts A.J."/>
            <person name="Stone R.T."/>
            <person name="Casas E."/>
            <person name="Wray J.E."/>
            <person name="White J."/>
            <person name="Cho J."/>
            <person name="Fahrenkrug S.C."/>
            <person name="Bennett G.L."/>
            <person name="Heaton M.P."/>
            <person name="Laegreid W.W."/>
            <person name="Rohrer G.A."/>
            <person name="Chitko-McKown C.G."/>
            <person name="Pertea G."/>
            <person name="Holt I."/>
            <person name="Karamycheva S."/>
            <person name="Liang F."/>
            <person name="Quackenbush J."/>
            <person name="Keele J.W."/>
        </authorList>
    </citation>
    <scope>NUCLEOTIDE SEQUENCE [LARGE SCALE MRNA] OF 201-366</scope>
</reference>
<keyword id="KW-0963">Cytoplasm</keyword>
<keyword id="KW-0539">Nucleus</keyword>
<keyword id="KW-0597">Phosphoprotein</keyword>
<keyword id="KW-1185">Reference proteome</keyword>
<keyword id="KW-0677">Repeat</keyword>
<keyword id="KW-0694">RNA-binding</keyword>
<keyword id="KW-0943">RNA-mediated gene silencing</keyword>
<keyword id="KW-0810">Translation regulation</keyword>
<organism>
    <name type="scientific">Bos taurus</name>
    <name type="common">Bovine</name>
    <dbReference type="NCBI Taxonomy" id="9913"/>
    <lineage>
        <taxon>Eukaryota</taxon>
        <taxon>Metazoa</taxon>
        <taxon>Chordata</taxon>
        <taxon>Craniata</taxon>
        <taxon>Vertebrata</taxon>
        <taxon>Euteleostomi</taxon>
        <taxon>Mammalia</taxon>
        <taxon>Eutheria</taxon>
        <taxon>Laurasiatheria</taxon>
        <taxon>Artiodactyla</taxon>
        <taxon>Ruminantia</taxon>
        <taxon>Pecora</taxon>
        <taxon>Bovidae</taxon>
        <taxon>Bovinae</taxon>
        <taxon>Bos</taxon>
    </lineage>
</organism>
<evidence type="ECO:0000250" key="1">
    <source>
        <dbReference type="UniProtKB" id="P97473"/>
    </source>
</evidence>
<evidence type="ECO:0000250" key="2">
    <source>
        <dbReference type="UniProtKB" id="Q15633"/>
    </source>
</evidence>
<evidence type="ECO:0000255" key="3">
    <source>
        <dbReference type="HAMAP-Rule" id="MF_03034"/>
    </source>
</evidence>
<evidence type="ECO:0000256" key="4">
    <source>
        <dbReference type="SAM" id="MobiDB-lite"/>
    </source>
</evidence>
<evidence type="ECO:0000305" key="5"/>
<sequence>MSEEEQGSGTTTGCGLPSIEQMLAANPGKTPISLLQEYGTRIGKTPVYDLLKAEGQAHQPNFTFRVTVGDTSCTGQGPSKKAAKHKAAEVALKHLKGGSMLEPALEDSSSFSPLDSSLPEDVPVFTAAAAATPVPSAVPTRSSPMEVQPPVSPQQSECNPVGALQELVVQKGWRLPEYTVTQESGPAHRKEFTMTCRVERFIEIGSGTSKKLAKRNAAAKMLLRVHTVPLDARDGNEAEPEDDHFSIGVGSRLDGLRNRGPGCTWDSLRNSVGEKILSLRSCSLGSLGALGPACCSVLSELSEEQAFHVSYLDIEELSLSGLCQCLVELSTQPATVCHGSAATREAARGEAARRALQYLKIMAGSK</sequence>
<proteinExistence type="evidence at transcript level"/>
<dbReference type="EMBL" id="BC122653">
    <property type="protein sequence ID" value="AAI22654.1"/>
    <property type="status" value="ALT_FRAME"/>
    <property type="molecule type" value="mRNA"/>
</dbReference>
<dbReference type="EMBL" id="CK769751">
    <property type="status" value="NOT_ANNOTATED_CDS"/>
    <property type="molecule type" value="mRNA"/>
</dbReference>
<dbReference type="RefSeq" id="NP_001069146.2">
    <property type="nucleotide sequence ID" value="NM_001075678.2"/>
</dbReference>
<dbReference type="BMRB" id="Q0IIG6"/>
<dbReference type="SMR" id="Q0IIG6"/>
<dbReference type="FunCoup" id="Q0IIG6">
    <property type="interactions" value="3322"/>
</dbReference>
<dbReference type="STRING" id="9913.ENSBTAP00000000558"/>
<dbReference type="PaxDb" id="9913-ENSBTAP00000000558"/>
<dbReference type="GeneID" id="514674"/>
<dbReference type="KEGG" id="bta:514674"/>
<dbReference type="CTD" id="6895"/>
<dbReference type="VEuPathDB" id="HostDB:ENSBTAG00000000435"/>
<dbReference type="eggNOG" id="KOG3732">
    <property type="taxonomic scope" value="Eukaryota"/>
</dbReference>
<dbReference type="HOGENOM" id="CLU_048292_2_0_1"/>
<dbReference type="InParanoid" id="Q0IIG6"/>
<dbReference type="OMA" id="GYSCTWD"/>
<dbReference type="OrthoDB" id="10056847at2759"/>
<dbReference type="TreeFam" id="TF315953"/>
<dbReference type="Reactome" id="R-BTA-203927">
    <property type="pathway name" value="MicroRNA (miRNA) biogenesis"/>
</dbReference>
<dbReference type="Reactome" id="R-BTA-426486">
    <property type="pathway name" value="Small interfering RNA (siRNA) biogenesis"/>
</dbReference>
<dbReference type="Reactome" id="R-BTA-9833482">
    <property type="pathway name" value="PKR-mediated signaling"/>
</dbReference>
<dbReference type="Proteomes" id="UP000009136">
    <property type="component" value="Chromosome 5"/>
</dbReference>
<dbReference type="Bgee" id="ENSBTAG00000000435">
    <property type="expression patterns" value="Expressed in retina and 105 other cell types or tissues"/>
</dbReference>
<dbReference type="GO" id="GO:0005737">
    <property type="term" value="C:cytoplasm"/>
    <property type="evidence" value="ECO:0000250"/>
    <property type="project" value="UniProtKB"/>
</dbReference>
<dbReference type="GO" id="GO:0005634">
    <property type="term" value="C:nucleus"/>
    <property type="evidence" value="ECO:0000318"/>
    <property type="project" value="GO_Central"/>
</dbReference>
<dbReference type="GO" id="GO:0048471">
    <property type="term" value="C:perinuclear region of cytoplasm"/>
    <property type="evidence" value="ECO:0007669"/>
    <property type="project" value="UniProtKB-SubCell"/>
</dbReference>
<dbReference type="GO" id="GO:0016442">
    <property type="term" value="C:RISC complex"/>
    <property type="evidence" value="ECO:0000250"/>
    <property type="project" value="UniProtKB"/>
</dbReference>
<dbReference type="GO" id="GO:0070578">
    <property type="term" value="C:RISC-loading complex"/>
    <property type="evidence" value="ECO:0000250"/>
    <property type="project" value="UniProtKB"/>
</dbReference>
<dbReference type="GO" id="GO:0003725">
    <property type="term" value="F:double-stranded RNA binding"/>
    <property type="evidence" value="ECO:0000318"/>
    <property type="project" value="GO_Central"/>
</dbReference>
<dbReference type="GO" id="GO:0035198">
    <property type="term" value="F:miRNA binding"/>
    <property type="evidence" value="ECO:0007669"/>
    <property type="project" value="UniProtKB-UniRule"/>
</dbReference>
<dbReference type="GO" id="GO:0070883">
    <property type="term" value="F:pre-miRNA binding"/>
    <property type="evidence" value="ECO:0007669"/>
    <property type="project" value="InterPro"/>
</dbReference>
<dbReference type="GO" id="GO:0042803">
    <property type="term" value="F:protein homodimerization activity"/>
    <property type="evidence" value="ECO:0007669"/>
    <property type="project" value="UniProtKB-UniRule"/>
</dbReference>
<dbReference type="GO" id="GO:0035197">
    <property type="term" value="F:siRNA binding"/>
    <property type="evidence" value="ECO:0000250"/>
    <property type="project" value="UniProtKB"/>
</dbReference>
<dbReference type="GO" id="GO:0098795">
    <property type="term" value="P:global gene silencing by mRNA cleavage"/>
    <property type="evidence" value="ECO:0000250"/>
    <property type="project" value="UniProtKB"/>
</dbReference>
<dbReference type="GO" id="GO:0050689">
    <property type="term" value="P:negative regulation of defense response to virus by host"/>
    <property type="evidence" value="ECO:0000250"/>
    <property type="project" value="UniProtKB"/>
</dbReference>
<dbReference type="GO" id="GO:0045070">
    <property type="term" value="P:positive regulation of viral genome replication"/>
    <property type="evidence" value="ECO:0000250"/>
    <property type="project" value="UniProtKB"/>
</dbReference>
<dbReference type="GO" id="GO:0031054">
    <property type="term" value="P:pre-miRNA processing"/>
    <property type="evidence" value="ECO:0000250"/>
    <property type="project" value="UniProtKB"/>
</dbReference>
<dbReference type="GO" id="GO:1903798">
    <property type="term" value="P:regulation of miRNA processing"/>
    <property type="evidence" value="ECO:0007669"/>
    <property type="project" value="InterPro"/>
</dbReference>
<dbReference type="GO" id="GO:0070920">
    <property type="term" value="P:regulation of regulatory ncRNA processing"/>
    <property type="evidence" value="ECO:0000318"/>
    <property type="project" value="GO_Central"/>
</dbReference>
<dbReference type="GO" id="GO:0070921">
    <property type="term" value="P:regulation of siRNA processing"/>
    <property type="evidence" value="ECO:0007669"/>
    <property type="project" value="InterPro"/>
</dbReference>
<dbReference type="GO" id="GO:0006417">
    <property type="term" value="P:regulation of translation"/>
    <property type="evidence" value="ECO:0007669"/>
    <property type="project" value="UniProtKB-KW"/>
</dbReference>
<dbReference type="GO" id="GO:0046782">
    <property type="term" value="P:regulation of viral transcription"/>
    <property type="evidence" value="ECO:0000250"/>
    <property type="project" value="UniProtKB"/>
</dbReference>
<dbReference type="GO" id="GO:0070922">
    <property type="term" value="P:RISC complex assembly"/>
    <property type="evidence" value="ECO:0007669"/>
    <property type="project" value="UniProtKB-UniRule"/>
</dbReference>
<dbReference type="GO" id="GO:0030422">
    <property type="term" value="P:siRNA processing"/>
    <property type="evidence" value="ECO:0000250"/>
    <property type="project" value="UniProtKB"/>
</dbReference>
<dbReference type="CDD" id="cd19890">
    <property type="entry name" value="DSRM_TARBP2_rpt1"/>
    <property type="match status" value="1"/>
</dbReference>
<dbReference type="CDD" id="cd10844">
    <property type="entry name" value="DSRM_TARBP2_rpt2"/>
    <property type="match status" value="1"/>
</dbReference>
<dbReference type="CDD" id="cd19893">
    <property type="entry name" value="DSRM_TARBP2_rpt3"/>
    <property type="match status" value="1"/>
</dbReference>
<dbReference type="FunFam" id="3.30.160.20:FF:000019">
    <property type="entry name" value="RISC-loading complex subunit TARBP2"/>
    <property type="match status" value="1"/>
</dbReference>
<dbReference type="FunFam" id="3.30.160.20:FF:000120">
    <property type="entry name" value="RISC-loading complex subunit TARBP2"/>
    <property type="match status" value="1"/>
</dbReference>
<dbReference type="FunFam" id="3.30.160.20:FF:000018">
    <property type="entry name" value="RISC-loading complex subunit TARBP2 isoform X3"/>
    <property type="match status" value="1"/>
</dbReference>
<dbReference type="Gene3D" id="3.30.160.20">
    <property type="match status" value="3"/>
</dbReference>
<dbReference type="HAMAP" id="MF_03034">
    <property type="entry name" value="TRBP2"/>
    <property type="match status" value="1"/>
</dbReference>
<dbReference type="InterPro" id="IPR014720">
    <property type="entry name" value="dsRBD_dom"/>
</dbReference>
<dbReference type="InterPro" id="IPR051247">
    <property type="entry name" value="RLC_Component"/>
</dbReference>
<dbReference type="InterPro" id="IPR028605">
    <property type="entry name" value="TRBP2"/>
</dbReference>
<dbReference type="InterPro" id="IPR044469">
    <property type="entry name" value="TRBP2_DSRM_1"/>
</dbReference>
<dbReference type="InterPro" id="IPR044470">
    <property type="entry name" value="TRBP2_DSRM_2"/>
</dbReference>
<dbReference type="InterPro" id="IPR044471">
    <property type="entry name" value="TRBP2_DSRM_3"/>
</dbReference>
<dbReference type="PANTHER" id="PTHR46205">
    <property type="entry name" value="LOQUACIOUS, ISOFORM B"/>
    <property type="match status" value="1"/>
</dbReference>
<dbReference type="PANTHER" id="PTHR46205:SF1">
    <property type="entry name" value="RISC-LOADING COMPLEX SUBUNIT TARBP2"/>
    <property type="match status" value="1"/>
</dbReference>
<dbReference type="Pfam" id="PF00035">
    <property type="entry name" value="dsrm"/>
    <property type="match status" value="2"/>
</dbReference>
<dbReference type="SMART" id="SM00358">
    <property type="entry name" value="DSRM"/>
    <property type="match status" value="3"/>
</dbReference>
<dbReference type="SUPFAM" id="SSF54768">
    <property type="entry name" value="dsRNA-binding domain-like"/>
    <property type="match status" value="3"/>
</dbReference>
<dbReference type="PROSITE" id="PS50137">
    <property type="entry name" value="DS_RBD"/>
    <property type="match status" value="3"/>
</dbReference>
<gene>
    <name evidence="3" type="primary">TARBP2</name>
</gene>
<accession>Q0IIG6</accession>
<feature type="chain" id="PRO_0000373970" description="RISC-loading complex subunit TARBP2">
    <location>
        <begin position="1"/>
        <end position="366"/>
    </location>
</feature>
<feature type="domain" description="DRBM 1" evidence="3">
    <location>
        <begin position="30"/>
        <end position="97"/>
    </location>
</feature>
<feature type="domain" description="DRBM 2" evidence="3">
    <location>
        <begin position="159"/>
        <end position="227"/>
    </location>
</feature>
<feature type="domain" description="DRBM 3" evidence="3">
    <location>
        <begin position="293"/>
        <end position="361"/>
    </location>
</feature>
<feature type="region of interest" description="Sufficient for interaction with PRKRA" evidence="3">
    <location>
        <begin position="22"/>
        <end position="105"/>
    </location>
</feature>
<feature type="region of interest" description="Disordered" evidence="4">
    <location>
        <begin position="135"/>
        <end position="158"/>
    </location>
</feature>
<feature type="region of interest" description="Sufficient for interaction with PRKRA" evidence="3">
    <location>
        <begin position="152"/>
        <end position="234"/>
    </location>
</feature>
<feature type="region of interest" description="Sufficient for interaction with DICER1" evidence="3">
    <location>
        <begin position="228"/>
        <end position="366"/>
    </location>
</feature>
<feature type="region of interest" description="Sufficient for interaction with PRKRA" evidence="3">
    <location>
        <begin position="287"/>
        <end position="366"/>
    </location>
</feature>
<feature type="modified residue" description="Phosphoserine" evidence="2">
    <location>
        <position position="152"/>
    </location>
</feature>
<feature type="sequence conflict" description="In Ref. 2; CK769751." evidence="5" ref="2">
    <original>E</original>
    <variation>D</variation>
    <location>
        <position position="241"/>
    </location>
</feature>
<feature type="sequence conflict" description="In Ref. 2; CK769751." evidence="5" ref="2">
    <original>I</original>
    <variation>L</variation>
    <location>
        <position position="247"/>
    </location>
</feature>
<feature type="sequence conflict" description="In Ref. 2; CK769751." evidence="5" ref="2">
    <original>A</original>
    <variation>T</variation>
    <location>
        <position position="342"/>
    </location>
</feature>
<protein>
    <recommendedName>
        <fullName evidence="3">RISC-loading complex subunit TARBP2</fullName>
    </recommendedName>
</protein>
<comment type="function">
    <text evidence="1 2 3">Required for formation of the RNA induced silencing complex (RISC). Component of the RISC loading complex (RLC), also known as the micro-RNA (miRNA) loading complex (miRLC), which is composed of DICER1, AGO2 and TARBP2. Within the RLC/miRLC, DICER1 and TARBP2 are required to process precursor miRNAs (pre-miRNAs) to mature miRNAs and then load them onto AGO2. AGO2 bound to the mature miRNA constitutes the minimal RISC and may subsequently dissociate from DICER1 and TARBP2. May also play a role in the production of short interfering RNAs (siRNAs) from double-stranded RNA (dsRNA) by DICER1 (By similarity). Binds in vitro to the PRM1 3'-UTR (By similarity). Seems to act as a repressor of translation (By similarity). For some pre-miRNA substrates, may also alter the choice of cleavage site by DICER1 (By similarity). Negatively regulates IRF7-mediated IFN-beta signaling triggered by viral infection by inhibiting the phosphorylation of IRF7 and promoting its 'Lys'-48-linked ubiquitination and degradation (By similarity).</text>
</comment>
<comment type="subunit">
    <text evidence="3">Self-associates. Component of the RISC loading complex (RLC), or micro-RNA (miRNA) loading complex (miRLC), which is composed of DICER1, AGO2 and TARBP2. Note that the trimeric RLC/miRLC is also referred to as RISC. Interacts with EIF2AK2/PKR and inhibits its protein kinase activity. Interacts with DHX9 and PRKRA. Interacts with DICER1, AGO2, MOV10, EIF6 and RPL7A (60S ribosome subunit); they form a large RNA-induced silencing complex (RISC). Interacts with IRF7; this interaction prevents IRF7 phosphorylation and activation (By similarity).</text>
</comment>
<comment type="subcellular location">
    <subcellularLocation>
        <location evidence="3">Cytoplasm</location>
    </subcellularLocation>
    <subcellularLocation>
        <location evidence="3">Cytoplasm</location>
        <location evidence="3">Perinuclear region</location>
    </subcellularLocation>
    <subcellularLocation>
        <location evidence="3">Nucleus</location>
    </subcellularLocation>
</comment>
<comment type="similarity">
    <text evidence="3">Belongs to the TARBP2 family.</text>
</comment>
<comment type="sequence caution" evidence="5">
    <conflict type="frameshift">
        <sequence resource="EMBL-CDS" id="AAI22654"/>
    </conflict>
</comment>